<dbReference type="GO" id="GO:0005576">
    <property type="term" value="C:extracellular region"/>
    <property type="evidence" value="ECO:0007669"/>
    <property type="project" value="UniProtKB-SubCell"/>
</dbReference>
<dbReference type="GO" id="GO:0007218">
    <property type="term" value="P:neuropeptide signaling pathway"/>
    <property type="evidence" value="ECO:0007669"/>
    <property type="project" value="UniProtKB-KW"/>
</dbReference>
<organism>
    <name type="scientific">Carcinus maenas</name>
    <name type="common">Common shore crab</name>
    <name type="synonym">Green crab</name>
    <dbReference type="NCBI Taxonomy" id="6759"/>
    <lineage>
        <taxon>Eukaryota</taxon>
        <taxon>Metazoa</taxon>
        <taxon>Ecdysozoa</taxon>
        <taxon>Arthropoda</taxon>
        <taxon>Crustacea</taxon>
        <taxon>Multicrustacea</taxon>
        <taxon>Malacostraca</taxon>
        <taxon>Eumalacostraca</taxon>
        <taxon>Eucarida</taxon>
        <taxon>Decapoda</taxon>
        <taxon>Pleocyemata</taxon>
        <taxon>Brachyura</taxon>
        <taxon>Eubrachyura</taxon>
        <taxon>Portunoidea</taxon>
        <taxon>Carcinidae</taxon>
        <taxon>Carcinus</taxon>
    </lineage>
</organism>
<proteinExistence type="evidence at protein level"/>
<reference key="1">
    <citation type="journal article" date="1997" name="Eur. J. Biochem.">
        <title>Isolation and identification of multiple neuropeptides of the allatostatin superfamily in the shore crab Carcinus maenas.</title>
        <authorList>
            <person name="Duve H."/>
            <person name="Johnsen A.H."/>
            <person name="Maestro J.-L."/>
            <person name="Scott A.G."/>
            <person name="Jaros P.P."/>
            <person name="Thorpe A."/>
        </authorList>
    </citation>
    <scope>PROTEIN SEQUENCE</scope>
    <scope>AMIDATION AT LEU-7</scope>
    <source>
        <tissue>Cerebral ganglion</tissue>
        <tissue>Thoracic ganglion</tissue>
    </source>
</reference>
<feature type="peptide" id="PRO_0000043462" description="Carcinustatin-5">
    <location>
        <begin position="1"/>
        <end position="7"/>
    </location>
</feature>
<feature type="modified residue" description="Leucine amide" evidence="1">
    <location>
        <position position="7"/>
    </location>
</feature>
<keyword id="KW-0027">Amidation</keyword>
<keyword id="KW-0903">Direct protein sequencing</keyword>
<keyword id="KW-0527">Neuropeptide</keyword>
<keyword id="KW-0964">Secreted</keyword>
<comment type="function">
    <text>May act as a neurotransmitter or neuromodulator.</text>
</comment>
<comment type="subcellular location">
    <subcellularLocation>
        <location>Secreted</location>
    </subcellularLocation>
</comment>
<comment type="similarity">
    <text evidence="2">Belongs to the allatostatin family.</text>
</comment>
<evidence type="ECO:0000269" key="1">
    <source>
    </source>
</evidence>
<evidence type="ECO:0000305" key="2"/>
<name>ALL5_CARMA</name>
<protein>
    <recommendedName>
        <fullName>Carcinustatin-5</fullName>
    </recommendedName>
</protein>
<accession>P81808</accession>
<sequence length="7" mass="781">NPYAFGL</sequence>